<protein>
    <recommendedName>
        <fullName>Interferon-induced protein with tetratricopeptide repeats 2</fullName>
        <shortName>IFIT-2</shortName>
    </recommendedName>
    <alternativeName>
        <fullName>ISG-54 K</fullName>
    </alternativeName>
    <alternativeName>
        <fullName>Interferon-induced 54 kDa protein</fullName>
        <shortName>IFI-54K</shortName>
        <shortName>P54</shortName>
    </alternativeName>
</protein>
<dbReference type="EMBL" id="M14660">
    <property type="protein sequence ID" value="AAA59191.1"/>
    <property type="molecule type" value="Genomic_DNA"/>
</dbReference>
<dbReference type="EMBL" id="M14659">
    <property type="protein sequence ID" value="AAA59191.1"/>
    <property type="status" value="JOINED"/>
    <property type="molecule type" value="Genomic_DNA"/>
</dbReference>
<dbReference type="EMBL" id="AL353751">
    <property type="status" value="NOT_ANNOTATED_CDS"/>
    <property type="molecule type" value="Genomic_DNA"/>
</dbReference>
<dbReference type="EMBL" id="X07557">
    <property type="protein sequence ID" value="CAA30438.1"/>
    <property type="molecule type" value="Genomic_DNA"/>
</dbReference>
<dbReference type="CCDS" id="CCDS41548.1"/>
<dbReference type="PIR" id="I59087">
    <property type="entry name" value="I59087"/>
</dbReference>
<dbReference type="RefSeq" id="NP_001538.4">
    <property type="nucleotide sequence ID" value="NM_001547.4"/>
</dbReference>
<dbReference type="PDB" id="4G1T">
    <property type="method" value="X-ray"/>
    <property type="resolution" value="2.80 A"/>
    <property type="chains" value="A/B=1-472"/>
</dbReference>
<dbReference type="PDBsum" id="4G1T"/>
<dbReference type="SMR" id="P09913"/>
<dbReference type="BioGRID" id="109658">
    <property type="interactions" value="78"/>
</dbReference>
<dbReference type="CORUM" id="P09913"/>
<dbReference type="DIP" id="DIP-48848N"/>
<dbReference type="FunCoup" id="P09913">
    <property type="interactions" value="375"/>
</dbReference>
<dbReference type="IntAct" id="P09913">
    <property type="interactions" value="42"/>
</dbReference>
<dbReference type="STRING" id="9606.ENSP00000490935"/>
<dbReference type="GlyCosmos" id="P09913">
    <property type="glycosylation" value="1 site, 1 glycan"/>
</dbReference>
<dbReference type="GlyGen" id="P09913">
    <property type="glycosylation" value="1 site, 1 O-linked glycan (1 site)"/>
</dbReference>
<dbReference type="iPTMnet" id="P09913"/>
<dbReference type="PhosphoSitePlus" id="P09913"/>
<dbReference type="BioMuta" id="IFIT2"/>
<dbReference type="DMDM" id="124488"/>
<dbReference type="jPOST" id="P09913"/>
<dbReference type="MassIVE" id="P09913"/>
<dbReference type="PaxDb" id="9606-ENSP00000360891"/>
<dbReference type="PeptideAtlas" id="P09913"/>
<dbReference type="ProteomicsDB" id="52276"/>
<dbReference type="Pumba" id="P09913"/>
<dbReference type="Antibodypedia" id="1277">
    <property type="antibodies" value="201 antibodies from 29 providers"/>
</dbReference>
<dbReference type="CPTC" id="P09913">
    <property type="antibodies" value="1 antibody"/>
</dbReference>
<dbReference type="DNASU" id="3433"/>
<dbReference type="Ensembl" id="ENST00000371826.4">
    <property type="protein sequence ID" value="ENSP00000360891.3"/>
    <property type="gene ID" value="ENSG00000119922.11"/>
</dbReference>
<dbReference type="Ensembl" id="ENST00000638108.1">
    <property type="protein sequence ID" value="ENSP00000490935.1"/>
    <property type="gene ID" value="ENSG00000119922.11"/>
</dbReference>
<dbReference type="Ensembl" id="ENST00000680809.1">
    <property type="protein sequence ID" value="ENSP00000506255.1"/>
    <property type="gene ID" value="ENSG00000119922.11"/>
</dbReference>
<dbReference type="Ensembl" id="ENST00000680954.1">
    <property type="protein sequence ID" value="ENSP00000505033.1"/>
    <property type="gene ID" value="ENSG00000119922.11"/>
</dbReference>
<dbReference type="GeneID" id="3433"/>
<dbReference type="KEGG" id="hsa:3433"/>
<dbReference type="MANE-Select" id="ENST00000371826.4">
    <property type="protein sequence ID" value="ENSP00000360891.3"/>
    <property type="RefSeq nucleotide sequence ID" value="NM_001547.5"/>
    <property type="RefSeq protein sequence ID" value="NP_001538.4"/>
</dbReference>
<dbReference type="UCSC" id="uc009xts.4">
    <property type="organism name" value="human"/>
</dbReference>
<dbReference type="AGR" id="HGNC:5409"/>
<dbReference type="CTD" id="3433"/>
<dbReference type="DisGeNET" id="3433"/>
<dbReference type="GeneCards" id="IFIT2"/>
<dbReference type="HGNC" id="HGNC:5409">
    <property type="gene designation" value="IFIT2"/>
</dbReference>
<dbReference type="HPA" id="ENSG00000119922">
    <property type="expression patterns" value="Tissue enhanced (bone)"/>
</dbReference>
<dbReference type="MIM" id="147040">
    <property type="type" value="gene"/>
</dbReference>
<dbReference type="neXtProt" id="NX_P09913"/>
<dbReference type="OpenTargets" id="ENSG00000119922"/>
<dbReference type="PharmGKB" id="PA29650"/>
<dbReference type="VEuPathDB" id="HostDB:ENSG00000119922"/>
<dbReference type="eggNOG" id="KOG1124">
    <property type="taxonomic scope" value="Eukaryota"/>
</dbReference>
<dbReference type="GeneTree" id="ENSGT00950000182946"/>
<dbReference type="HOGENOM" id="CLU_043482_0_0_1"/>
<dbReference type="InParanoid" id="P09913"/>
<dbReference type="OMA" id="HIGCCYR"/>
<dbReference type="OrthoDB" id="10043504at2759"/>
<dbReference type="PAN-GO" id="P09913">
    <property type="GO annotations" value="3 GO annotations based on evolutionary models"/>
</dbReference>
<dbReference type="PhylomeDB" id="P09913"/>
<dbReference type="TreeFam" id="TF342671"/>
<dbReference type="PathwayCommons" id="P09913"/>
<dbReference type="Reactome" id="R-HSA-909733">
    <property type="pathway name" value="Interferon alpha/beta signaling"/>
</dbReference>
<dbReference type="SignaLink" id="P09913"/>
<dbReference type="BioGRID-ORCS" id="3433">
    <property type="hits" value="14 hits in 1156 CRISPR screens"/>
</dbReference>
<dbReference type="ChiTaRS" id="IFIT2">
    <property type="organism name" value="human"/>
</dbReference>
<dbReference type="EvolutionaryTrace" id="P09913"/>
<dbReference type="GeneWiki" id="IFIT2"/>
<dbReference type="GenomeRNAi" id="3433"/>
<dbReference type="Pharos" id="P09913">
    <property type="development level" value="Tbio"/>
</dbReference>
<dbReference type="PRO" id="PR:P09913"/>
<dbReference type="Proteomes" id="UP000005640">
    <property type="component" value="Chromosome 10"/>
</dbReference>
<dbReference type="RNAct" id="P09913">
    <property type="molecule type" value="protein"/>
</dbReference>
<dbReference type="Bgee" id="ENSG00000119922">
    <property type="expression patterns" value="Expressed in palpebral conjunctiva and 183 other cell types or tissues"/>
</dbReference>
<dbReference type="ExpressionAtlas" id="P09913">
    <property type="expression patterns" value="baseline and differential"/>
</dbReference>
<dbReference type="GO" id="GO:0005737">
    <property type="term" value="C:cytoplasm"/>
    <property type="evidence" value="ECO:0000314"/>
    <property type="project" value="UniProtKB"/>
</dbReference>
<dbReference type="GO" id="GO:0005829">
    <property type="term" value="C:cytosol"/>
    <property type="evidence" value="ECO:0000318"/>
    <property type="project" value="GO_Central"/>
</dbReference>
<dbReference type="GO" id="GO:0005783">
    <property type="term" value="C:endoplasmic reticulum"/>
    <property type="evidence" value="ECO:0000314"/>
    <property type="project" value="UniProtKB"/>
</dbReference>
<dbReference type="GO" id="GO:0003723">
    <property type="term" value="F:RNA binding"/>
    <property type="evidence" value="ECO:0007005"/>
    <property type="project" value="UniProtKB"/>
</dbReference>
<dbReference type="GO" id="GO:0140374">
    <property type="term" value="P:antiviral innate immune response"/>
    <property type="evidence" value="ECO:0000314"/>
    <property type="project" value="UniProt"/>
</dbReference>
<dbReference type="GO" id="GO:0008637">
    <property type="term" value="P:apoptotic mitochondrial changes"/>
    <property type="evidence" value="ECO:0000304"/>
    <property type="project" value="UniProtKB"/>
</dbReference>
<dbReference type="GO" id="GO:0051607">
    <property type="term" value="P:defense response to virus"/>
    <property type="evidence" value="ECO:0000318"/>
    <property type="project" value="GO_Central"/>
</dbReference>
<dbReference type="GO" id="GO:0032091">
    <property type="term" value="P:negative regulation of protein binding"/>
    <property type="evidence" value="ECO:0000314"/>
    <property type="project" value="BHF-UCL"/>
</dbReference>
<dbReference type="GO" id="GO:0043065">
    <property type="term" value="P:positive regulation of apoptotic process"/>
    <property type="evidence" value="ECO:0000314"/>
    <property type="project" value="UniProtKB"/>
</dbReference>
<dbReference type="GO" id="GO:0009615">
    <property type="term" value="P:response to virus"/>
    <property type="evidence" value="ECO:0000314"/>
    <property type="project" value="BHF-UCL"/>
</dbReference>
<dbReference type="FunFam" id="1.25.40.10:FF:000036">
    <property type="entry name" value="interferon-induced protein with tetratricopeptide repeats 5"/>
    <property type="match status" value="1"/>
</dbReference>
<dbReference type="Gene3D" id="1.25.40.10">
    <property type="entry name" value="Tetratricopeptide repeat domain"/>
    <property type="match status" value="3"/>
</dbReference>
<dbReference type="InterPro" id="IPR011990">
    <property type="entry name" value="TPR-like_helical_dom_sf"/>
</dbReference>
<dbReference type="InterPro" id="IPR019734">
    <property type="entry name" value="TPR_rpt"/>
</dbReference>
<dbReference type="PANTHER" id="PTHR10271">
    <property type="entry name" value="INTERFERON-INDUCED PROTEIN WITH TETRATRICOPEPTIDE REPEATS"/>
    <property type="match status" value="1"/>
</dbReference>
<dbReference type="PANTHER" id="PTHR10271:SF4">
    <property type="entry name" value="INTERFERON-INDUCED PROTEIN WITH TETRATRICOPEPTIDE REPEATS 2"/>
    <property type="match status" value="1"/>
</dbReference>
<dbReference type="Pfam" id="PF13181">
    <property type="entry name" value="TPR_8"/>
    <property type="match status" value="2"/>
</dbReference>
<dbReference type="SMART" id="SM00028">
    <property type="entry name" value="TPR"/>
    <property type="match status" value="3"/>
</dbReference>
<dbReference type="SUPFAM" id="SSF48452">
    <property type="entry name" value="TPR-like"/>
    <property type="match status" value="2"/>
</dbReference>
<dbReference type="PROSITE" id="PS50005">
    <property type="entry name" value="TPR"/>
    <property type="match status" value="1"/>
</dbReference>
<dbReference type="PROSITE" id="PS50293">
    <property type="entry name" value="TPR_REGION"/>
    <property type="match status" value="1"/>
</dbReference>
<proteinExistence type="evidence at protein level"/>
<sequence>MSENNKNSLESSLRQLKCHFTWNLMEGENSLDDFEDKVFYRTEFQNREFKATMCNLLAYLKHLKGQNEAALECLRKAEELIQQEHADQAEIRSLVTWGNYAWVYYHMGRLSDVQIYVDKVKHVCEKFSSPYRIESPELDCEEGWTRLKCGGNQNERAKVCFEKALEKKPKNPEFTSGLAIASYRLDNWPPSQNAIDPLRQAIRLNPDNQYLKVLLALKLHKMREEGEEEGEGEKLVEEALEKAPGVTDVLRSAAKFYRRKDEPDKAIELLKKALEYIPNNAYLHCQIGCCYRAKVFQVMNLRENGMYGKRKLLELIGHAVAHLKKADEANDNLFRVCSILASLHALADQYEDAEYYFQKEFSKELTPVAKQLLHLRYGNFQLYQMKCEDKAIHHFIEGVKINQKSREKEKMKDKLQKIAKMRLSKNGADSEALHVLAFLQELNEKMQQADEDSERGLESGSLIPSASSWNGE</sequence>
<feature type="initiator methionine" description="Removed" evidence="9">
    <location>
        <position position="1"/>
    </location>
</feature>
<feature type="chain" id="PRO_0000106347" description="Interferon-induced protein with tetratricopeptide repeats 2">
    <location>
        <begin position="2"/>
        <end position="472"/>
    </location>
</feature>
<feature type="repeat" description="TPR 1" evidence="1 7">
    <location>
        <begin position="51"/>
        <end position="89"/>
    </location>
</feature>
<feature type="repeat" description="TPR 2" evidence="1 7">
    <location>
        <begin position="90"/>
        <end position="135"/>
    </location>
</feature>
<feature type="repeat" description="TPR 3" evidence="1 7">
    <location>
        <begin position="136"/>
        <end position="171"/>
    </location>
</feature>
<feature type="repeat" description="TPR 4" evidence="1 7">
    <location>
        <begin position="172"/>
        <end position="208"/>
    </location>
</feature>
<feature type="repeat" description="TPR 5" evidence="1 7">
    <location>
        <begin position="247"/>
        <end position="280"/>
    </location>
</feature>
<feature type="repeat" description="TPR 6" evidence="1 7">
    <location>
        <begin position="281"/>
        <end position="335"/>
    </location>
</feature>
<feature type="repeat" description="TPR 7" evidence="1 7">
    <location>
        <begin position="336"/>
        <end position="366"/>
    </location>
</feature>
<feature type="repeat" description="TPR 8" evidence="1 7">
    <location>
        <begin position="367"/>
        <end position="405"/>
    </location>
</feature>
<feature type="repeat" description="TPR 9" evidence="1 7">
    <location>
        <begin position="406"/>
        <end position="448"/>
    </location>
</feature>
<feature type="region of interest" description="Disordered" evidence="2">
    <location>
        <begin position="446"/>
        <end position="472"/>
    </location>
</feature>
<feature type="compositionally biased region" description="Polar residues" evidence="2">
    <location>
        <begin position="462"/>
        <end position="472"/>
    </location>
</feature>
<feature type="modified residue" description="N-acetylserine" evidence="9">
    <location>
        <position position="2"/>
    </location>
</feature>
<feature type="sequence variant" id="VAR_052615" description="In dbSNP:rs17468739.">
    <original>E</original>
    <variation>A</variation>
    <location>
        <position position="79"/>
    </location>
</feature>
<feature type="sequence variant" id="VAR_052616" description="In dbSNP:rs2070845.">
    <original>K</original>
    <variation>R</variation>
    <location>
        <position position="121"/>
    </location>
</feature>
<feature type="sequence variant" id="VAR_014490" description="In dbSNP:rs1727.">
    <original>D</original>
    <variation>E</variation>
    <location>
        <position position="352"/>
    </location>
</feature>
<feature type="mutagenesis site" description="Abolishes RNA-binding." evidence="7">
    <original>R</original>
    <variation>E</variation>
    <location>
        <position position="184"/>
    </location>
</feature>
<feature type="mutagenesis site" description="Significantly impairs RNA-binding; when associated with Glu-259." evidence="7">
    <original>K</original>
    <variation>E</variation>
    <location>
        <position position="255"/>
    </location>
</feature>
<feature type="mutagenesis site" description="Significantly impairs RNA-binding; when associated with Glu-255." evidence="7">
    <original>R</original>
    <variation>E</variation>
    <location>
        <position position="259"/>
    </location>
</feature>
<feature type="mutagenesis site" description="Abolishes RNA-binding." evidence="7">
    <original>R</original>
    <variation>E</variation>
    <location>
        <position position="292"/>
    </location>
</feature>
<feature type="mutagenesis site" description="Abolishes RNA-binding." evidence="7">
    <original>K</original>
    <variation>E</variation>
    <location>
        <position position="410"/>
    </location>
</feature>
<feature type="helix" evidence="10">
    <location>
        <begin position="9"/>
        <end position="14"/>
    </location>
</feature>
<feature type="turn" evidence="10">
    <location>
        <begin position="19"/>
        <end position="21"/>
    </location>
</feature>
<feature type="turn" evidence="10">
    <location>
        <begin position="24"/>
        <end position="27"/>
    </location>
</feature>
<feature type="helix" evidence="10">
    <location>
        <begin position="31"/>
        <end position="41"/>
    </location>
</feature>
<feature type="helix" evidence="10">
    <location>
        <begin position="52"/>
        <end position="63"/>
    </location>
</feature>
<feature type="helix" evidence="10">
    <location>
        <begin position="67"/>
        <end position="84"/>
    </location>
</feature>
<feature type="helix" evidence="10">
    <location>
        <begin position="86"/>
        <end position="88"/>
    </location>
</feature>
<feature type="turn" evidence="10">
    <location>
        <begin position="90"/>
        <end position="93"/>
    </location>
</feature>
<feature type="helix" evidence="10">
    <location>
        <begin position="94"/>
        <end position="106"/>
    </location>
</feature>
<feature type="helix" evidence="10">
    <location>
        <begin position="110"/>
        <end position="126"/>
    </location>
</feature>
<feature type="helix" evidence="10">
    <location>
        <begin position="136"/>
        <end position="149"/>
    </location>
</feature>
<feature type="helix" evidence="10">
    <location>
        <begin position="153"/>
        <end position="167"/>
    </location>
</feature>
<feature type="helix" evidence="10">
    <location>
        <begin position="172"/>
        <end position="187"/>
    </location>
</feature>
<feature type="helix" evidence="10">
    <location>
        <begin position="195"/>
        <end position="204"/>
    </location>
</feature>
<feature type="helix" evidence="10">
    <location>
        <begin position="209"/>
        <end position="221"/>
    </location>
</feature>
<feature type="helix" evidence="10">
    <location>
        <begin position="231"/>
        <end position="242"/>
    </location>
</feature>
<feature type="helix" evidence="10">
    <location>
        <begin position="247"/>
        <end position="259"/>
    </location>
</feature>
<feature type="helix" evidence="10">
    <location>
        <begin position="263"/>
        <end position="276"/>
    </location>
</feature>
<feature type="helix" evidence="10">
    <location>
        <begin position="281"/>
        <end position="300"/>
    </location>
</feature>
<feature type="helix" evidence="10">
    <location>
        <begin position="309"/>
        <end position="329"/>
    </location>
</feature>
<feature type="turn" evidence="10">
    <location>
        <begin position="331"/>
        <end position="333"/>
    </location>
</feature>
<feature type="helix" evidence="10">
    <location>
        <begin position="337"/>
        <end position="346"/>
    </location>
</feature>
<feature type="helix" evidence="10">
    <location>
        <begin position="350"/>
        <end position="362"/>
    </location>
</feature>
<feature type="helix" evidence="10">
    <location>
        <begin position="367"/>
        <end position="383"/>
    </location>
</feature>
<feature type="helix" evidence="10">
    <location>
        <begin position="388"/>
        <end position="400"/>
    </location>
</feature>
<feature type="helix" evidence="10">
    <location>
        <begin position="406"/>
        <end position="425"/>
    </location>
</feature>
<feature type="helix" evidence="10">
    <location>
        <begin position="432"/>
        <end position="445"/>
    </location>
</feature>
<feature type="helix" evidence="10">
    <location>
        <begin position="448"/>
        <end position="451"/>
    </location>
</feature>
<evidence type="ECO:0000255" key="1">
    <source>
        <dbReference type="PROSITE-ProRule" id="PRU00339"/>
    </source>
</evidence>
<evidence type="ECO:0000256" key="2">
    <source>
        <dbReference type="SAM" id="MobiDB-lite"/>
    </source>
</evidence>
<evidence type="ECO:0000269" key="3">
    <source>
    </source>
</evidence>
<evidence type="ECO:0000269" key="4">
    <source>
    </source>
</evidence>
<evidence type="ECO:0000269" key="5">
    <source>
    </source>
</evidence>
<evidence type="ECO:0000269" key="6">
    <source>
    </source>
</evidence>
<evidence type="ECO:0000269" key="7">
    <source>
    </source>
</evidence>
<evidence type="ECO:0000305" key="8"/>
<evidence type="ECO:0007744" key="9">
    <source>
    </source>
</evidence>
<evidence type="ECO:0007829" key="10">
    <source>
        <dbReference type="PDB" id="4G1T"/>
    </source>
</evidence>
<accession>P09913</accession>
<accession>Q5T767</accession>
<reference key="1">
    <citation type="journal article" date="1986" name="Proc. Natl. Acad. Sci. U.S.A.">
        <title>Interferon-stimulated transcription: isolation of an inducible gene and identification of its regulatory region.</title>
        <authorList>
            <person name="Levy D."/>
            <person name="Larner A."/>
            <person name="Chaudhuri A."/>
            <person name="Babiss L.E."/>
            <person name="Darnell J.E. Jr."/>
        </authorList>
    </citation>
    <scope>NUCLEOTIDE SEQUENCE [GENOMIC DNA]</scope>
</reference>
<reference key="2">
    <citation type="journal article" date="2004" name="Nature">
        <title>The DNA sequence and comparative analysis of human chromosome 10.</title>
        <authorList>
            <person name="Deloukas P."/>
            <person name="Earthrowl M.E."/>
            <person name="Grafham D.V."/>
            <person name="Rubenfield M."/>
            <person name="French L."/>
            <person name="Steward C.A."/>
            <person name="Sims S.K."/>
            <person name="Jones M.C."/>
            <person name="Searle S."/>
            <person name="Scott C."/>
            <person name="Howe K."/>
            <person name="Hunt S.E."/>
            <person name="Andrews T.D."/>
            <person name="Gilbert J.G.R."/>
            <person name="Swarbreck D."/>
            <person name="Ashurst J.L."/>
            <person name="Taylor A."/>
            <person name="Battles J."/>
            <person name="Bird C.P."/>
            <person name="Ainscough R."/>
            <person name="Almeida J.P."/>
            <person name="Ashwell R.I.S."/>
            <person name="Ambrose K.D."/>
            <person name="Babbage A.K."/>
            <person name="Bagguley C.L."/>
            <person name="Bailey J."/>
            <person name="Banerjee R."/>
            <person name="Bates K."/>
            <person name="Beasley H."/>
            <person name="Bray-Allen S."/>
            <person name="Brown A.J."/>
            <person name="Brown J.Y."/>
            <person name="Burford D.C."/>
            <person name="Burrill W."/>
            <person name="Burton J."/>
            <person name="Cahill P."/>
            <person name="Camire D."/>
            <person name="Carter N.P."/>
            <person name="Chapman J.C."/>
            <person name="Clark S.Y."/>
            <person name="Clarke G."/>
            <person name="Clee C.M."/>
            <person name="Clegg S."/>
            <person name="Corby N."/>
            <person name="Coulson A."/>
            <person name="Dhami P."/>
            <person name="Dutta I."/>
            <person name="Dunn M."/>
            <person name="Faulkner L."/>
            <person name="Frankish A."/>
            <person name="Frankland J.A."/>
            <person name="Garner P."/>
            <person name="Garnett J."/>
            <person name="Gribble S."/>
            <person name="Griffiths C."/>
            <person name="Grocock R."/>
            <person name="Gustafson E."/>
            <person name="Hammond S."/>
            <person name="Harley J.L."/>
            <person name="Hart E."/>
            <person name="Heath P.D."/>
            <person name="Ho T.P."/>
            <person name="Hopkins B."/>
            <person name="Horne J."/>
            <person name="Howden P.J."/>
            <person name="Huckle E."/>
            <person name="Hynds C."/>
            <person name="Johnson C."/>
            <person name="Johnson D."/>
            <person name="Kana A."/>
            <person name="Kay M."/>
            <person name="Kimberley A.M."/>
            <person name="Kershaw J.K."/>
            <person name="Kokkinaki M."/>
            <person name="Laird G.K."/>
            <person name="Lawlor S."/>
            <person name="Lee H.M."/>
            <person name="Leongamornlert D.A."/>
            <person name="Laird G."/>
            <person name="Lloyd C."/>
            <person name="Lloyd D.M."/>
            <person name="Loveland J."/>
            <person name="Lovell J."/>
            <person name="McLaren S."/>
            <person name="McLay K.E."/>
            <person name="McMurray A."/>
            <person name="Mashreghi-Mohammadi M."/>
            <person name="Matthews L."/>
            <person name="Milne S."/>
            <person name="Nickerson T."/>
            <person name="Nguyen M."/>
            <person name="Overton-Larty E."/>
            <person name="Palmer S.A."/>
            <person name="Pearce A.V."/>
            <person name="Peck A.I."/>
            <person name="Pelan S."/>
            <person name="Phillimore B."/>
            <person name="Porter K."/>
            <person name="Rice C.M."/>
            <person name="Rogosin A."/>
            <person name="Ross M.T."/>
            <person name="Sarafidou T."/>
            <person name="Sehra H.K."/>
            <person name="Shownkeen R."/>
            <person name="Skuce C.D."/>
            <person name="Smith M."/>
            <person name="Standring L."/>
            <person name="Sycamore N."/>
            <person name="Tester J."/>
            <person name="Thorpe A."/>
            <person name="Torcasso W."/>
            <person name="Tracey A."/>
            <person name="Tromans A."/>
            <person name="Tsolas J."/>
            <person name="Wall M."/>
            <person name="Walsh J."/>
            <person name="Wang H."/>
            <person name="Weinstock K."/>
            <person name="West A.P."/>
            <person name="Willey D.L."/>
            <person name="Whitehead S.L."/>
            <person name="Wilming L."/>
            <person name="Wray P.W."/>
            <person name="Young L."/>
            <person name="Chen Y."/>
            <person name="Lovering R.C."/>
            <person name="Moschonas N.K."/>
            <person name="Siebert R."/>
            <person name="Fechtel K."/>
            <person name="Bentley D."/>
            <person name="Durbin R.M."/>
            <person name="Hubbard T."/>
            <person name="Doucette-Stamm L."/>
            <person name="Beck S."/>
            <person name="Smith D.R."/>
            <person name="Rogers J."/>
        </authorList>
    </citation>
    <scope>NUCLEOTIDE SEQUENCE [LARGE SCALE GENOMIC DNA]</scope>
</reference>
<reference key="3">
    <citation type="journal article" date="1988" name="Eur. J. Biochem.">
        <title>Regulation of two interferon-inducible human genes by interferon, poly(rI).poly(rC) and viruses.</title>
        <authorList>
            <person name="Wathelet M.G."/>
            <person name="Clauss I.M."/>
            <person name="Content J."/>
            <person name="Huez G.A."/>
        </authorList>
    </citation>
    <scope>NUCLEOTIDE SEQUENCE [GENOMIC DNA] OF 1-2</scope>
</reference>
<reference key="4">
    <citation type="journal article" date="1988" name="FEBS Lett.">
        <title>The IFI-56K and IFI-54K interferon-inducible human genes belong to the same gene family.</title>
        <authorList>
            <person name="Wathelet M.G."/>
            <person name="Clauss I.M."/>
            <person name="Content J."/>
            <person name="Huez G.A."/>
        </authorList>
    </citation>
    <scope>SIMILARITY TO IFI-56K</scope>
</reference>
<reference key="5">
    <citation type="journal article" date="2006" name="J. Biol. Chem.">
        <title>Distinct induction patterns and functions of two closely related interferon-inducible human genes, ISG54 and ISG56.</title>
        <authorList>
            <person name="Terenzi F."/>
            <person name="Hui D.J."/>
            <person name="Merrick W.C."/>
            <person name="Sen G.C."/>
        </authorList>
    </citation>
    <scope>INDUCTION</scope>
    <scope>INTERACTION WITH EIF3E AND EIF3C</scope>
</reference>
<reference key="6">
    <citation type="journal article" date="2009" name="Proc. Natl. Acad. Sci. U.S.A.">
        <title>ISG56 is a negative-feedback regulator of virus-triggered signaling and cellular antiviral response.</title>
        <authorList>
            <person name="Li Y."/>
            <person name="Li C."/>
            <person name="Xue P."/>
            <person name="Zhong B."/>
            <person name="Mao A.P."/>
            <person name="Ran Y."/>
            <person name="Chen H."/>
            <person name="Wang Y.Y."/>
            <person name="Yang F."/>
            <person name="Shu H.B."/>
        </authorList>
    </citation>
    <scope>INTERACTION WITH STING1/MITA</scope>
</reference>
<reference key="7">
    <citation type="journal article" date="2011" name="J. Biol. Chem.">
        <title>The interferon stimulated gene 54 promotes apoptosis.</title>
        <authorList>
            <person name="Stawowczyk M."/>
            <person name="Van Scoy S."/>
            <person name="Kumar K.P."/>
            <person name="Reich N.C."/>
        </authorList>
    </citation>
    <scope>FUNCTION</scope>
    <scope>SUBCELLULAR LOCATION</scope>
    <scope>INTERACTION WITH IFIT1 AND IFIT3</scope>
</reference>
<reference key="8">
    <citation type="journal article" date="2011" name="J. Interferon Cytokine Res.">
        <title>The ISG56/IFIT1 gene family.</title>
        <authorList>
            <person name="Fensterl V."/>
            <person name="Sen G.C."/>
        </authorList>
    </citation>
    <scope>REVIEW</scope>
</reference>
<reference key="9">
    <citation type="journal article" date="2011" name="Nat. Immunol.">
        <title>IFIT1 is an antiviral protein that recognizes 5'-triphosphate RNA.</title>
        <authorList>
            <person name="Pichlmair A."/>
            <person name="Lassnig C."/>
            <person name="Eberle C.A."/>
            <person name="Gorna M.W."/>
            <person name="Baumann C.L."/>
            <person name="Burkard T.R."/>
            <person name="Buerckstuemmer T."/>
            <person name="Stefanovic A."/>
            <person name="Krieger S."/>
            <person name="Bennett K.L."/>
            <person name="Ruelicke T."/>
            <person name="Weber F."/>
            <person name="Colinge J."/>
            <person name="Mueller M."/>
            <person name="Superti-Furga G."/>
        </authorList>
    </citation>
    <scope>INTERACTION WITH IFIT1 AND IFIT3</scope>
</reference>
<reference key="10">
    <citation type="journal article" date="2012" name="Proc. Natl. Acad. Sci. U.S.A.">
        <title>N-terminal acetylome analyses and functional insights of the N-terminal acetyltransferase NatB.</title>
        <authorList>
            <person name="Van Damme P."/>
            <person name="Lasa M."/>
            <person name="Polevoda B."/>
            <person name="Gazquez C."/>
            <person name="Elosegui-Artola A."/>
            <person name="Kim D.S."/>
            <person name="De Juan-Pardo E."/>
            <person name="Demeyer K."/>
            <person name="Hole K."/>
            <person name="Larrea E."/>
            <person name="Timmerman E."/>
            <person name="Prieto J."/>
            <person name="Arnesen T."/>
            <person name="Sherman F."/>
            <person name="Gevaert K."/>
            <person name="Aldabe R."/>
        </authorList>
    </citation>
    <scope>ACETYLATION [LARGE SCALE ANALYSIS] AT SER-2</scope>
    <scope>CLEAVAGE OF INITIATOR METHIONINE [LARGE SCALE ANALYSIS]</scope>
    <scope>IDENTIFICATION BY MASS SPECTROMETRY [LARGE SCALE ANALYSIS]</scope>
</reference>
<reference key="11">
    <citation type="journal article" date="2012" name="Cell Res.">
        <title>Crystal structure of ISG54 reveals a novel RNA binding structure and potential functional mechanisms.</title>
        <authorList>
            <person name="Yang Z."/>
            <person name="Liang H."/>
            <person name="Zhou Q."/>
            <person name="Li Y."/>
            <person name="Chen H."/>
            <person name="Ye W."/>
            <person name="Chen D."/>
            <person name="Fleming J."/>
            <person name="Shu H."/>
            <person name="Liu Y."/>
        </authorList>
    </citation>
    <scope>X-RAY CRYSTALLOGRAPHY (2.8 ANGSTROMS)</scope>
    <scope>TPR REPEATS</scope>
    <scope>SUBUNIT</scope>
    <scope>MUTAGENESIS OF ARG-184; LYS-255; ARG-259; ARG-292 AND LYS-410</scope>
</reference>
<keyword id="KW-0002">3D-structure</keyword>
<keyword id="KW-0007">Acetylation</keyword>
<keyword id="KW-0051">Antiviral defense</keyword>
<keyword id="KW-0053">Apoptosis</keyword>
<keyword id="KW-0963">Cytoplasm</keyword>
<keyword id="KW-0256">Endoplasmic reticulum</keyword>
<keyword id="KW-0391">Immunity</keyword>
<keyword id="KW-0399">Innate immunity</keyword>
<keyword id="KW-1267">Proteomics identification</keyword>
<keyword id="KW-1185">Reference proteome</keyword>
<keyword id="KW-0677">Repeat</keyword>
<keyword id="KW-0694">RNA-binding</keyword>
<keyword id="KW-0802">TPR repeat</keyword>
<name>IFIT2_HUMAN</name>
<comment type="function">
    <text evidence="5">IFN-induced antiviral protein which inhibits expression of viral messenger RNAs lacking 2'-O-methylation of the 5' cap. The ribose 2'-O-methylation would provide a molecular signature to distinguish between self and non-self mRNAs by the host during viral infection. Viruses evolved several ways to evade this restriction system such as encoding their own 2'-O-methylase for their mRNAs or by stealing host cap containing the 2'-O-methylation (cap snatching mechanism). Binds AU-rich viral RNAs, with or without 5' triphosphorylation, RNA-binding is required for antiviral activity. Can promote apoptosis.</text>
</comment>
<comment type="subunit">
    <text evidence="3 4 5 6 7">Domain-swapped homodimer. Component of an interferon-dependent multiprotein complex, at least composed of IFIT1, IFIT2 and IFIT3. Interacts with IFIT1 and IFIT3. Interacts with STING1/MITA and disrupts its interaction with MAVS or TBK1. Interacts with EIF3E and EIF3C.</text>
</comment>
<comment type="interaction">
    <interactant intactId="EBI-3507167">
        <id>P09913</id>
    </interactant>
    <interactant intactId="EBI-745117">
        <id>P09914</id>
        <label>IFIT1</label>
    </interactant>
    <organismsDiffer>false</organismsDiffer>
    <experiments>7</experiments>
</comment>
<comment type="interaction">
    <interactant intactId="EBI-3507167">
        <id>P09913</id>
    </interactant>
    <interactant intactId="EBI-745127">
        <id>O14879</id>
        <label>IFIT3</label>
    </interactant>
    <organismsDiffer>false</organismsDiffer>
    <experiments>7</experiments>
</comment>
<comment type="interaction">
    <interactant intactId="EBI-3507167">
        <id>P09913</id>
    </interactant>
    <interactant intactId="EBI-2800345">
        <id>Q86WV6</id>
        <label>STING1</label>
    </interactant>
    <organismsDiffer>false</organismsDiffer>
    <experiments>3</experiments>
</comment>
<comment type="subcellular location">
    <subcellularLocation>
        <location evidence="5">Cytoplasm</location>
    </subcellularLocation>
    <subcellularLocation>
        <location evidence="5">Endoplasmic reticulum</location>
    </subcellularLocation>
</comment>
<comment type="induction">
    <text evidence="3">By type I interferons, dsRNAs and viruses.</text>
</comment>
<comment type="domain">
    <text>The C-terminal part folds into a super-helical structure and has an extensively positively-charged nucleotide-binding channel on its inner surface.</text>
</comment>
<comment type="similarity">
    <text evidence="8">Belongs to the IFIT family.</text>
</comment>
<organism>
    <name type="scientific">Homo sapiens</name>
    <name type="common">Human</name>
    <dbReference type="NCBI Taxonomy" id="9606"/>
    <lineage>
        <taxon>Eukaryota</taxon>
        <taxon>Metazoa</taxon>
        <taxon>Chordata</taxon>
        <taxon>Craniata</taxon>
        <taxon>Vertebrata</taxon>
        <taxon>Euteleostomi</taxon>
        <taxon>Mammalia</taxon>
        <taxon>Eutheria</taxon>
        <taxon>Euarchontoglires</taxon>
        <taxon>Primates</taxon>
        <taxon>Haplorrhini</taxon>
        <taxon>Catarrhini</taxon>
        <taxon>Hominidae</taxon>
        <taxon>Homo</taxon>
    </lineage>
</organism>
<gene>
    <name type="primary">IFIT2</name>
    <name type="synonym">CIG-42</name>
    <name type="synonym">G10P2</name>
    <name type="synonym">IFI54</name>
    <name type="synonym">ISG54</name>
</gene>